<reference key="1">
    <citation type="journal article" date="1986" name="J. Biol. Chem.">
        <title>Isolation and characterization of Limulus C-reactive protein genes.</title>
        <authorList>
            <person name="Nguyen N.Y."/>
            <person name="Suzuki A."/>
            <person name="Cheng S.-M."/>
            <person name="Zon G."/>
            <person name="Liu T.-Y."/>
        </authorList>
    </citation>
    <scope>NUCLEOTIDE SEQUENCE [GENOMIC DNA]</scope>
</reference>
<reference key="2">
    <citation type="journal article" date="1986" name="J. Biol. Chem.">
        <title>The amino acid sequence of Limulus C-reactive protein. Evidence of polymorphism.</title>
        <authorList>
            <person name="Nguyen N.Y."/>
            <person name="Suzuki A."/>
            <person name="Boykins R.A."/>
            <person name="Liu T.-Y."/>
        </authorList>
    </citation>
    <scope>PROTEIN SEQUENCE OF 25-242</scope>
    <scope>DISULFIDE BONDS</scope>
    <scope>GLYCOSYLATION AT ASN-147</scope>
</reference>
<protein>
    <recommendedName>
        <fullName>C-reactive protein 3.3</fullName>
    </recommendedName>
</protein>
<accession>P06207</accession>
<feature type="signal peptide" evidence="4">
    <location>
        <begin position="1"/>
        <end position="24"/>
    </location>
</feature>
<feature type="chain" id="PRO_0000023534" description="C-reactive protein 3.3">
    <location>
        <begin position="25"/>
        <end position="242"/>
    </location>
</feature>
<feature type="domain" description="Pentraxin (PTX)" evidence="3">
    <location>
        <begin position="30"/>
        <end position="241"/>
    </location>
</feature>
<feature type="binding site" evidence="2">
    <location>
        <position position="60"/>
    </location>
    <ligand>
        <name>phosphocholine</name>
        <dbReference type="ChEBI" id="CHEBI:295975"/>
    </ligand>
</feature>
<feature type="binding site" evidence="2">
    <location>
        <position position="63"/>
    </location>
    <ligand>
        <name>phosphocholine</name>
        <dbReference type="ChEBI" id="CHEBI:295975"/>
    </ligand>
</feature>
<feature type="binding site" evidence="1">
    <location>
        <position position="85"/>
    </location>
    <ligand>
        <name>Ca(2+)</name>
        <dbReference type="ChEBI" id="CHEBI:29108"/>
        <label>1</label>
    </ligand>
</feature>
<feature type="binding site" evidence="1">
    <location>
        <position position="86"/>
    </location>
    <ligand>
        <name>Ca(2+)</name>
        <dbReference type="ChEBI" id="CHEBI:29108"/>
        <label>1</label>
    </ligand>
</feature>
<feature type="binding site" evidence="1">
    <location>
        <position position="169"/>
    </location>
    <ligand>
        <name>Ca(2+)</name>
        <dbReference type="ChEBI" id="CHEBI:29108"/>
        <label>1</label>
    </ligand>
</feature>
<feature type="binding site" evidence="1">
    <location>
        <position position="170"/>
    </location>
    <ligand>
        <name>Ca(2+)</name>
        <dbReference type="ChEBI" id="CHEBI:29108"/>
        <label>1</label>
    </ligand>
</feature>
<feature type="binding site" evidence="1">
    <location>
        <position position="170"/>
    </location>
    <ligand>
        <name>Ca(2+)</name>
        <dbReference type="ChEBI" id="CHEBI:29108"/>
        <label>2</label>
    </ligand>
</feature>
<feature type="binding site" evidence="1">
    <location>
        <position position="180"/>
    </location>
    <ligand>
        <name>Ca(2+)</name>
        <dbReference type="ChEBI" id="CHEBI:29108"/>
        <label>2</label>
    </ligand>
</feature>
<feature type="glycosylation site" description="N-linked (GlcNAc...) asparagine" evidence="4">
    <location>
        <position position="147"/>
    </location>
</feature>
<feature type="disulfide bond" evidence="3 4">
    <location>
        <begin position="62"/>
        <end position="125"/>
    </location>
</feature>
<feature type="disulfide bond" evidence="4">
    <location>
        <begin position="112"/>
        <end position="144"/>
    </location>
</feature>
<feature type="disulfide bond" evidence="4">
    <location>
        <begin position="207"/>
        <end position="241"/>
    </location>
</feature>
<sequence>MKTFHGPTCGTAVSLCLLLFLTSALEEGEITSKVKFPPSSSPSFPRLVMVGTLPDLQEITLCYWFKVNCLKGTLHMFSYATAKKDNELLTLLDEQGDFLFNVHGAPQLKVQCPNKIHIGKWHHVCHTWSSWEGEATIAVDGFHCKGNATGIAVGRTLSQGGLVVLGQDQDSVGGKFDATQSLEGELSELNLWNTVLNHEQIKYLSKCAHPSERHIYGNIIQWDKTQFKAYDGVVLSPNEICA</sequence>
<organism>
    <name type="scientific">Limulus polyphemus</name>
    <name type="common">Atlantic horseshoe crab</name>
    <dbReference type="NCBI Taxonomy" id="6850"/>
    <lineage>
        <taxon>Eukaryota</taxon>
        <taxon>Metazoa</taxon>
        <taxon>Ecdysozoa</taxon>
        <taxon>Arthropoda</taxon>
        <taxon>Chelicerata</taxon>
        <taxon>Merostomata</taxon>
        <taxon>Xiphosura</taxon>
        <taxon>Limulidae</taxon>
        <taxon>Limulus</taxon>
    </lineage>
</organism>
<keyword id="KW-0106">Calcium</keyword>
<keyword id="KW-0903">Direct protein sequencing</keyword>
<keyword id="KW-1015">Disulfide bond</keyword>
<keyword id="KW-0325">Glycoprotein</keyword>
<keyword id="KW-0479">Metal-binding</keyword>
<keyword id="KW-0964">Secreted</keyword>
<keyword id="KW-0732">Signal</keyword>
<proteinExistence type="evidence at protein level"/>
<comment type="function">
    <text>Might serve the role of immunoglobulins.</text>
</comment>
<comment type="cofactor">
    <cofactor evidence="1">
        <name>Ca(2+)</name>
        <dbReference type="ChEBI" id="CHEBI:29108"/>
    </cofactor>
    <text evidence="1">Binds 2 calcium ions per subunit.</text>
</comment>
<comment type="subunit">
    <text>Homopentamer. Pentraxin (or pentaxin) have a discoid arrangement of 5 non-covalently bound subunits.</text>
</comment>
<comment type="subcellular location">
    <subcellularLocation>
        <location>Secreted</location>
    </subcellularLocation>
</comment>
<comment type="similarity">
    <text evidence="5">Belongs to the pentraxin family.</text>
</comment>
<evidence type="ECO:0000250" key="1"/>
<evidence type="ECO:0000255" key="2"/>
<evidence type="ECO:0000255" key="3">
    <source>
        <dbReference type="PROSITE-ProRule" id="PRU01172"/>
    </source>
</evidence>
<evidence type="ECO:0000269" key="4">
    <source>
    </source>
</evidence>
<evidence type="ECO:0000305" key="5"/>
<name>CRP3_LIMPO</name>
<dbReference type="EMBL" id="M14025">
    <property type="protein sequence ID" value="AAA28269.1"/>
    <property type="molecule type" value="Genomic_DNA"/>
</dbReference>
<dbReference type="PIR" id="B25192">
    <property type="entry name" value="B25192"/>
</dbReference>
<dbReference type="PIR" id="B25193">
    <property type="entry name" value="B25193"/>
</dbReference>
<dbReference type="SMR" id="P06207"/>
<dbReference type="iPTMnet" id="P06207"/>
<dbReference type="OrthoDB" id="6515930at2759"/>
<dbReference type="Proteomes" id="UP000694941">
    <property type="component" value="Unplaced"/>
</dbReference>
<dbReference type="GO" id="GO:0005576">
    <property type="term" value="C:extracellular region"/>
    <property type="evidence" value="ECO:0007669"/>
    <property type="project" value="UniProtKB-SubCell"/>
</dbReference>
<dbReference type="GO" id="GO:0046872">
    <property type="term" value="F:metal ion binding"/>
    <property type="evidence" value="ECO:0007669"/>
    <property type="project" value="UniProtKB-KW"/>
</dbReference>
<dbReference type="Gene3D" id="2.60.120.200">
    <property type="match status" value="1"/>
</dbReference>
<dbReference type="InterPro" id="IPR013320">
    <property type="entry name" value="ConA-like_dom_sf"/>
</dbReference>
<dbReference type="InterPro" id="IPR051360">
    <property type="entry name" value="Neuronal_Pentraxin_Related"/>
</dbReference>
<dbReference type="InterPro" id="IPR030476">
    <property type="entry name" value="Pentaxin_CS"/>
</dbReference>
<dbReference type="InterPro" id="IPR001759">
    <property type="entry name" value="Pentraxin-related"/>
</dbReference>
<dbReference type="PANTHER" id="PTHR19277:SF161">
    <property type="entry name" value="LAMININ G DOMAIN-CONTAINING PROTEIN"/>
    <property type="match status" value="1"/>
</dbReference>
<dbReference type="PANTHER" id="PTHR19277">
    <property type="entry name" value="PENTRAXIN"/>
    <property type="match status" value="1"/>
</dbReference>
<dbReference type="Pfam" id="PF00354">
    <property type="entry name" value="Pentaxin"/>
    <property type="match status" value="1"/>
</dbReference>
<dbReference type="PRINTS" id="PR00895">
    <property type="entry name" value="PENTAXIN"/>
</dbReference>
<dbReference type="SMART" id="SM00159">
    <property type="entry name" value="PTX"/>
    <property type="match status" value="1"/>
</dbReference>
<dbReference type="SUPFAM" id="SSF49899">
    <property type="entry name" value="Concanavalin A-like lectins/glucanases"/>
    <property type="match status" value="1"/>
</dbReference>
<dbReference type="PROSITE" id="PS00289">
    <property type="entry name" value="PTX_1"/>
    <property type="match status" value="1"/>
</dbReference>
<dbReference type="PROSITE" id="PS51828">
    <property type="entry name" value="PTX_2"/>
    <property type="match status" value="1"/>
</dbReference>